<name>RR14_TETOB</name>
<organism>
    <name type="scientific">Tetradesmus obliquus</name>
    <name type="common">Green alga</name>
    <name type="synonym">Acutodesmus obliquus</name>
    <dbReference type="NCBI Taxonomy" id="3088"/>
    <lineage>
        <taxon>Eukaryota</taxon>
        <taxon>Viridiplantae</taxon>
        <taxon>Chlorophyta</taxon>
        <taxon>core chlorophytes</taxon>
        <taxon>Chlorophyceae</taxon>
        <taxon>CS clade</taxon>
        <taxon>Sphaeropleales</taxon>
        <taxon>Scenedesmaceae</taxon>
        <taxon>Tetradesmus</taxon>
    </lineage>
</organism>
<geneLocation type="chloroplast"/>
<proteinExistence type="inferred from homology"/>
<dbReference type="EMBL" id="DQ396875">
    <property type="protein sequence ID" value="ABD48268.1"/>
    <property type="molecule type" value="Genomic_DNA"/>
</dbReference>
<dbReference type="RefSeq" id="YP_635985.1">
    <property type="nucleotide sequence ID" value="NC_008101.1"/>
</dbReference>
<dbReference type="SMR" id="Q1KVT9"/>
<dbReference type="GeneID" id="4099801"/>
<dbReference type="GO" id="GO:0009507">
    <property type="term" value="C:chloroplast"/>
    <property type="evidence" value="ECO:0007669"/>
    <property type="project" value="UniProtKB-SubCell"/>
</dbReference>
<dbReference type="GO" id="GO:0015935">
    <property type="term" value="C:small ribosomal subunit"/>
    <property type="evidence" value="ECO:0007669"/>
    <property type="project" value="TreeGrafter"/>
</dbReference>
<dbReference type="GO" id="GO:0019843">
    <property type="term" value="F:rRNA binding"/>
    <property type="evidence" value="ECO:0007669"/>
    <property type="project" value="UniProtKB-UniRule"/>
</dbReference>
<dbReference type="GO" id="GO:0003735">
    <property type="term" value="F:structural constituent of ribosome"/>
    <property type="evidence" value="ECO:0007669"/>
    <property type="project" value="InterPro"/>
</dbReference>
<dbReference type="GO" id="GO:0006412">
    <property type="term" value="P:translation"/>
    <property type="evidence" value="ECO:0007669"/>
    <property type="project" value="UniProtKB-UniRule"/>
</dbReference>
<dbReference type="FunFam" id="1.10.287.1480:FF:000001">
    <property type="entry name" value="30S ribosomal protein S14"/>
    <property type="match status" value="1"/>
</dbReference>
<dbReference type="Gene3D" id="1.10.287.1480">
    <property type="match status" value="1"/>
</dbReference>
<dbReference type="HAMAP" id="MF_00537">
    <property type="entry name" value="Ribosomal_uS14_1"/>
    <property type="match status" value="1"/>
</dbReference>
<dbReference type="InterPro" id="IPR001209">
    <property type="entry name" value="Ribosomal_uS14"/>
</dbReference>
<dbReference type="InterPro" id="IPR023036">
    <property type="entry name" value="Ribosomal_uS14_bac/plastid"/>
</dbReference>
<dbReference type="InterPro" id="IPR018271">
    <property type="entry name" value="Ribosomal_uS14_CS"/>
</dbReference>
<dbReference type="NCBIfam" id="NF006477">
    <property type="entry name" value="PRK08881.1"/>
    <property type="match status" value="1"/>
</dbReference>
<dbReference type="PANTHER" id="PTHR19836">
    <property type="entry name" value="30S RIBOSOMAL PROTEIN S14"/>
    <property type="match status" value="1"/>
</dbReference>
<dbReference type="PANTHER" id="PTHR19836:SF19">
    <property type="entry name" value="SMALL RIBOSOMAL SUBUNIT PROTEIN US14M"/>
    <property type="match status" value="1"/>
</dbReference>
<dbReference type="Pfam" id="PF00253">
    <property type="entry name" value="Ribosomal_S14"/>
    <property type="match status" value="1"/>
</dbReference>
<dbReference type="SUPFAM" id="SSF57716">
    <property type="entry name" value="Glucocorticoid receptor-like (DNA-binding domain)"/>
    <property type="match status" value="1"/>
</dbReference>
<dbReference type="PROSITE" id="PS00527">
    <property type="entry name" value="RIBOSOMAL_S14"/>
    <property type="match status" value="1"/>
</dbReference>
<gene>
    <name evidence="1" type="primary">rps14</name>
</gene>
<keyword id="KW-0150">Chloroplast</keyword>
<keyword id="KW-0934">Plastid</keyword>
<keyword id="KW-0687">Ribonucleoprotein</keyword>
<keyword id="KW-0689">Ribosomal protein</keyword>
<keyword id="KW-0694">RNA-binding</keyword>
<keyword id="KW-0699">rRNA-binding</keyword>
<evidence type="ECO:0000255" key="1">
    <source>
        <dbReference type="HAMAP-Rule" id="MF_00537"/>
    </source>
</evidence>
<evidence type="ECO:0000305" key="2"/>
<sequence length="100" mass="11668">MANKAMIQRELKRQNLVMKFAKKRAILKQQIQQASSLKEKLALHRKLQQLPRNSSPVRLHNRCLVTGRPKGYFRDFGLSRHVLREMAHEGLLPGVRKASW</sequence>
<protein>
    <recommendedName>
        <fullName evidence="1">Small ribosomal subunit protein uS14c</fullName>
    </recommendedName>
    <alternativeName>
        <fullName evidence="2">30S ribosomal protein S14, chloroplastic</fullName>
    </alternativeName>
</protein>
<comment type="function">
    <text evidence="1">Binds 16S rRNA, required for the assembly of 30S particles.</text>
</comment>
<comment type="subunit">
    <text evidence="1">Part of the 30S ribosomal subunit.</text>
</comment>
<comment type="subcellular location">
    <subcellularLocation>
        <location>Plastid</location>
        <location>Chloroplast</location>
    </subcellularLocation>
</comment>
<comment type="similarity">
    <text evidence="1">Belongs to the universal ribosomal protein uS14 family.</text>
</comment>
<reference key="1">
    <citation type="journal article" date="2006" name="BMC Evol. Biol.">
        <title>The complete chloroplast genome sequence of the chlorophycean green alga Scenedesmus obliquus reveals a compact gene organization and a biased distribution of genes on the two DNA strands.</title>
        <authorList>
            <person name="de Cambiaire J.-C."/>
            <person name="Otis C."/>
            <person name="Lemieux C."/>
            <person name="Turmel M."/>
        </authorList>
    </citation>
    <scope>NUCLEOTIDE SEQUENCE [LARGE SCALE GENOMIC DNA]</scope>
    <source>
        <strain>UTEX 393</strain>
    </source>
</reference>
<accession>Q1KVT9</accession>
<feature type="chain" id="PRO_0000276701" description="Small ribosomal subunit protein uS14c">
    <location>
        <begin position="1"/>
        <end position="100"/>
    </location>
</feature>